<name>FOCD_ECOLX</name>
<feature type="signal peptide" evidence="2">
    <location>
        <begin position="1"/>
        <end position="38"/>
    </location>
</feature>
<feature type="chain" id="PRO_0000009315" description="Outer membrane usher protein FocD">
    <location>
        <begin position="39"/>
        <end position="875"/>
    </location>
</feature>
<feature type="disulfide bond" evidence="2">
    <location>
        <begin position="852"/>
        <end position="874"/>
    </location>
</feature>
<dbReference type="EMBL" id="Z46635">
    <property type="protein sequence ID" value="CAA86605.1"/>
    <property type="molecule type" value="Genomic_DNA"/>
</dbReference>
<dbReference type="PIR" id="S49608">
    <property type="entry name" value="S49608"/>
</dbReference>
<dbReference type="SMR" id="P46009"/>
<dbReference type="GO" id="GO:0009279">
    <property type="term" value="C:cell outer membrane"/>
    <property type="evidence" value="ECO:0007669"/>
    <property type="project" value="UniProtKB-SubCell"/>
</dbReference>
<dbReference type="GO" id="GO:0015473">
    <property type="term" value="F:fimbrial usher porin activity"/>
    <property type="evidence" value="ECO:0007669"/>
    <property type="project" value="InterPro"/>
</dbReference>
<dbReference type="GO" id="GO:0009297">
    <property type="term" value="P:pilus assembly"/>
    <property type="evidence" value="ECO:0007669"/>
    <property type="project" value="InterPro"/>
</dbReference>
<dbReference type="FunFam" id="2.60.40.2610:FF:000001">
    <property type="entry name" value="Outer membrane fimbrial usher protein"/>
    <property type="match status" value="1"/>
</dbReference>
<dbReference type="FunFam" id="2.60.40.3110:FF:000001">
    <property type="entry name" value="Putative fimbrial outer membrane usher"/>
    <property type="match status" value="1"/>
</dbReference>
<dbReference type="Gene3D" id="2.60.40.2070">
    <property type="match status" value="1"/>
</dbReference>
<dbReference type="Gene3D" id="2.60.40.3110">
    <property type="match status" value="1"/>
</dbReference>
<dbReference type="Gene3D" id="3.10.20.410">
    <property type="match status" value="1"/>
</dbReference>
<dbReference type="Gene3D" id="2.60.40.2610">
    <property type="entry name" value="Outer membrane usher protein FimD, plug domain"/>
    <property type="match status" value="1"/>
</dbReference>
<dbReference type="InterPro" id="IPR000015">
    <property type="entry name" value="Fimb_usher"/>
</dbReference>
<dbReference type="InterPro" id="IPR018030">
    <property type="entry name" value="Fimbrial_membr_usher_CS"/>
</dbReference>
<dbReference type="InterPro" id="IPR042186">
    <property type="entry name" value="FimD_plug_dom"/>
</dbReference>
<dbReference type="InterPro" id="IPR025949">
    <property type="entry name" value="PapC-like_C"/>
</dbReference>
<dbReference type="InterPro" id="IPR043142">
    <property type="entry name" value="PapC-like_C_sf"/>
</dbReference>
<dbReference type="InterPro" id="IPR025885">
    <property type="entry name" value="PapC_N"/>
</dbReference>
<dbReference type="InterPro" id="IPR037224">
    <property type="entry name" value="PapC_N_sf"/>
</dbReference>
<dbReference type="NCBIfam" id="NF011740">
    <property type="entry name" value="PRK15193.1"/>
    <property type="match status" value="1"/>
</dbReference>
<dbReference type="PANTHER" id="PTHR30451:SF21">
    <property type="entry name" value="FIMBRIAL USHER DOMAIN-CONTAINING PROTEIN YDET-RELATED"/>
    <property type="match status" value="1"/>
</dbReference>
<dbReference type="PANTHER" id="PTHR30451">
    <property type="entry name" value="OUTER MEMBRANE USHER PROTEIN"/>
    <property type="match status" value="1"/>
</dbReference>
<dbReference type="Pfam" id="PF13953">
    <property type="entry name" value="PapC_C"/>
    <property type="match status" value="1"/>
</dbReference>
<dbReference type="Pfam" id="PF13954">
    <property type="entry name" value="PapC_N"/>
    <property type="match status" value="1"/>
</dbReference>
<dbReference type="Pfam" id="PF00577">
    <property type="entry name" value="Usher"/>
    <property type="match status" value="1"/>
</dbReference>
<dbReference type="SUPFAM" id="SSF141729">
    <property type="entry name" value="FimD N-terminal domain-like"/>
    <property type="match status" value="1"/>
</dbReference>
<dbReference type="PROSITE" id="PS01151">
    <property type="entry name" value="FIMBRIAL_USHER"/>
    <property type="match status" value="1"/>
</dbReference>
<protein>
    <recommendedName>
        <fullName>Outer membrane usher protein FocD</fullName>
    </recommendedName>
</protein>
<comment type="function">
    <text>Involved in the export and assembly of the F1C fimbriae subunits across the outer membrane.</text>
</comment>
<comment type="subcellular location">
    <subcellularLocation>
        <location evidence="1">Cell outer membrane</location>
        <topology evidence="1">Multi-pass membrane protein</topology>
    </subcellularLocation>
</comment>
<comment type="similarity">
    <text evidence="3">Belongs to the fimbrial export usher family.</text>
</comment>
<organism>
    <name type="scientific">Escherichia coli</name>
    <dbReference type="NCBI Taxonomy" id="562"/>
    <lineage>
        <taxon>Bacteria</taxon>
        <taxon>Pseudomonadati</taxon>
        <taxon>Pseudomonadota</taxon>
        <taxon>Gammaproteobacteria</taxon>
        <taxon>Enterobacterales</taxon>
        <taxon>Enterobacteriaceae</taxon>
        <taxon>Escherichia</taxon>
    </lineage>
</organism>
<evidence type="ECO:0000250" key="1"/>
<evidence type="ECO:0000255" key="2"/>
<evidence type="ECO:0000305" key="3"/>
<gene>
    <name type="primary">focD</name>
</gene>
<proteinExistence type="inferred from homology"/>
<reference key="1">
    <citation type="journal article" date="1995" name="J. Bacteriol.">
        <title>The export systems of type 1 and F1C fimbriae are interchangeable but work in parental pairs.</title>
        <authorList>
            <person name="Klemm P."/>
            <person name="Joergensen B.J."/>
            <person name="Kreft B."/>
            <person name="Christiansen G."/>
        </authorList>
    </citation>
    <scope>NUCLEOTIDE SEQUENCE [GENOMIC DNA]</scope>
    <source>
        <strain>AD110 / UPEC</strain>
    </source>
</reference>
<keyword id="KW-0998">Cell outer membrane</keyword>
<keyword id="KW-1015">Disulfide bond</keyword>
<keyword id="KW-1029">Fimbrium biogenesis</keyword>
<keyword id="KW-0472">Membrane</keyword>
<keyword id="KW-0732">Signal</keyword>
<keyword id="KW-0812">Transmembrane</keyword>
<keyword id="KW-1134">Transmembrane beta strand</keyword>
<keyword id="KW-0813">Transport</keyword>
<accession>P46009</accession>
<sequence length="875" mass="96211">MFFGDGGQLLSDKSLTGSAGGGNNRMKFNILPLAFFIGIIVSPARAELYFNRRFLSDDPDAVADLSAFTQGQELPPGVYRVDIYLNDTYISTRDVQFQMSQDGKQLAPCLSPEHMSAMGVNRYAVPGMERLPADTCTSLNSMIQGATFRFDVGQQRLYLTVPQLYMSNQARGYIAPEYWDNGITAALLNYDFSGNRVRDTYGGTSDYAYLNLKTGLNIGSWRLRDNTSWSYSAGKGYSQNNWQHINTWLERDIVSLRSRLTMGDSYTRGDIFDGVNFRGIQLASDDNMVPDSQRGYAPTIHGISRGTSRISIRQNGYEIYQSTLPPGPFEINDIYPAGSGGDLQVTLQEADGSVQRFNVPWSSVPVLQREGHLKYALSAGEFRSGGHQQDNPRFAEGTLKYGLPDGWTVYGGAWIAERYRAFNLGVGKNMGWLGAVSLDATRANARLPDESRHDGQSYRFLYNKSLTETGTNIQLIGYRYSTRGYFTFADTAWKKMSGYSVLTQDGVIQIQPKYTDYYNLAYNKREGAGEYQPADGESSTLYLSGSHQSYWGTDRTDRQLNAGFNSSVNDISWSLNYSLSRNAWQHETDRILSFDVSIPFSHWMRSDSTSAWRNASARYSQTLEAHGQAASTAGLYGTLLGDNNLGYSIQSGYTRGGYEGSSKTGYASLNYRGGYGNASAGYSHSGGYRQLYYGLSGGILAHANGLTLSQPLGDTLILVRAPGASDTRIENQTGVSTDWRGYAVLPYATDYRENRVALDTNTLADNVDIENTVVSVVPTHGAVVRADYKTRVGVKVLMTLMRNGKAVPFGSVVTARNGGSSIAGENGQVYLSGMPLSGQVSVKWGSQTTDQCTADYKLPKESAGQILSHVTASCR</sequence>